<name>YDIB_ECO55</name>
<evidence type="ECO:0000255" key="1">
    <source>
        <dbReference type="HAMAP-Rule" id="MF_01578"/>
    </source>
</evidence>
<feature type="chain" id="PRO_1000185638" description="Quinate/shikimate dehydrogenase">
    <location>
        <begin position="1"/>
        <end position="288"/>
    </location>
</feature>
<feature type="binding site" evidence="1">
    <location>
        <position position="71"/>
    </location>
    <ligand>
        <name>substrate</name>
    </ligand>
</feature>
<feature type="binding site" evidence="1">
    <location>
        <position position="107"/>
    </location>
    <ligand>
        <name>substrate</name>
    </ligand>
</feature>
<feature type="binding site" evidence="1">
    <location>
        <begin position="132"/>
        <end position="135"/>
    </location>
    <ligand>
        <name>NAD(+)</name>
        <dbReference type="ChEBI" id="CHEBI:57540"/>
    </ligand>
</feature>
<feature type="binding site" evidence="1">
    <location>
        <begin position="155"/>
        <end position="158"/>
    </location>
    <ligand>
        <name>NAD(+)</name>
        <dbReference type="ChEBI" id="CHEBI:57540"/>
    </ligand>
</feature>
<feature type="binding site" evidence="1">
    <location>
        <position position="205"/>
    </location>
    <ligand>
        <name>NAD(+)</name>
        <dbReference type="ChEBI" id="CHEBI:57540"/>
    </ligand>
</feature>
<feature type="binding site" evidence="1">
    <location>
        <begin position="232"/>
        <end position="235"/>
    </location>
    <ligand>
        <name>NAD(+)</name>
        <dbReference type="ChEBI" id="CHEBI:57540"/>
    </ligand>
</feature>
<feature type="binding site" evidence="1">
    <location>
        <position position="255"/>
    </location>
    <ligand>
        <name>NAD(+)</name>
        <dbReference type="ChEBI" id="CHEBI:57540"/>
    </ligand>
</feature>
<protein>
    <recommendedName>
        <fullName evidence="1">Quinate/shikimate dehydrogenase</fullName>
        <ecNumber evidence="1">1.1.1.282</ecNumber>
    </recommendedName>
    <alternativeName>
        <fullName evidence="1">NAD-dependent shikimate 5-dehydrogenase</fullName>
    </alternativeName>
</protein>
<organism>
    <name type="scientific">Escherichia coli (strain 55989 / EAEC)</name>
    <dbReference type="NCBI Taxonomy" id="585055"/>
    <lineage>
        <taxon>Bacteria</taxon>
        <taxon>Pseudomonadati</taxon>
        <taxon>Pseudomonadota</taxon>
        <taxon>Gammaproteobacteria</taxon>
        <taxon>Enterobacterales</taxon>
        <taxon>Enterobacteriaceae</taxon>
        <taxon>Escherichia</taxon>
    </lineage>
</organism>
<accession>B7L5P4</accession>
<proteinExistence type="inferred from homology"/>
<comment type="function">
    <text evidence="1">The actual biological function of YdiB remains unclear, nor is it known whether 3-dehydroshikimate or quinate represents the natural substrate. Catalyzes the reversible NAD-dependent reduction of both 3-dehydroshikimate (DHSA) and 3-dehydroquinate to yield shikimate (SA) and quinate, respectively. It can use both NAD or NADP for catalysis, however it has higher catalytic efficiency with NAD.</text>
</comment>
<comment type="catalytic activity">
    <reaction evidence="1">
        <text>L-quinate + NAD(+) = 3-dehydroquinate + NADH + H(+)</text>
        <dbReference type="Rhea" id="RHEA:22364"/>
        <dbReference type="ChEBI" id="CHEBI:15378"/>
        <dbReference type="ChEBI" id="CHEBI:29751"/>
        <dbReference type="ChEBI" id="CHEBI:32364"/>
        <dbReference type="ChEBI" id="CHEBI:57540"/>
        <dbReference type="ChEBI" id="CHEBI:57945"/>
        <dbReference type="EC" id="1.1.1.282"/>
    </reaction>
</comment>
<comment type="catalytic activity">
    <reaction evidence="1">
        <text>L-quinate + NADP(+) = 3-dehydroquinate + NADPH + H(+)</text>
        <dbReference type="Rhea" id="RHEA:18425"/>
        <dbReference type="ChEBI" id="CHEBI:15378"/>
        <dbReference type="ChEBI" id="CHEBI:29751"/>
        <dbReference type="ChEBI" id="CHEBI:32364"/>
        <dbReference type="ChEBI" id="CHEBI:57783"/>
        <dbReference type="ChEBI" id="CHEBI:58349"/>
        <dbReference type="EC" id="1.1.1.282"/>
    </reaction>
</comment>
<comment type="catalytic activity">
    <reaction evidence="1">
        <text>shikimate + NADP(+) = 3-dehydroshikimate + NADPH + H(+)</text>
        <dbReference type="Rhea" id="RHEA:17737"/>
        <dbReference type="ChEBI" id="CHEBI:15378"/>
        <dbReference type="ChEBI" id="CHEBI:16630"/>
        <dbReference type="ChEBI" id="CHEBI:36208"/>
        <dbReference type="ChEBI" id="CHEBI:57783"/>
        <dbReference type="ChEBI" id="CHEBI:58349"/>
        <dbReference type="EC" id="1.1.1.282"/>
    </reaction>
</comment>
<comment type="catalytic activity">
    <reaction evidence="1">
        <text>shikimate + NAD(+) = 3-dehydroshikimate + NADH + H(+)</text>
        <dbReference type="Rhea" id="RHEA:17741"/>
        <dbReference type="ChEBI" id="CHEBI:15378"/>
        <dbReference type="ChEBI" id="CHEBI:16630"/>
        <dbReference type="ChEBI" id="CHEBI:36208"/>
        <dbReference type="ChEBI" id="CHEBI:57540"/>
        <dbReference type="ChEBI" id="CHEBI:57945"/>
        <dbReference type="EC" id="1.1.1.282"/>
    </reaction>
</comment>
<comment type="pathway">
    <text evidence="1">Metabolic intermediate biosynthesis; chorismate biosynthesis; chorismate from D-erythrose 4-phosphate and phosphoenolpyruvate: step 4/7.</text>
</comment>
<comment type="subunit">
    <text evidence="1">Homodimer.</text>
</comment>
<comment type="similarity">
    <text evidence="1">Belongs to the shikimate dehydrogenase family.</text>
</comment>
<sequence>MDVTAKYELIGLMAYPIRHSLSPEMQNKALEKAGLPFTYMAFEVDNDSFPGAIEGLKALKMRGTGISMPNKQLACEYVDELTPAAKLVGAINTIVNDDGYLRGYNTDGTGHIRAIKESGFDIKGKTMVLLGAGGASTAIGAQGAIEGLKEIKLFNRRDEFFDKALAFAQRVNENTDCVVTVTDLADQQAFAEALASADILTNGTKVGMKPLENESLVNDISLLHPGLLVTECVYNPHMTKLLQQAQQAGCKTIDGYGMLLWQGAEQFTLWTGKDFPLEYVKQVMGFGA</sequence>
<reference key="1">
    <citation type="journal article" date="2009" name="PLoS Genet.">
        <title>Organised genome dynamics in the Escherichia coli species results in highly diverse adaptive paths.</title>
        <authorList>
            <person name="Touchon M."/>
            <person name="Hoede C."/>
            <person name="Tenaillon O."/>
            <person name="Barbe V."/>
            <person name="Baeriswyl S."/>
            <person name="Bidet P."/>
            <person name="Bingen E."/>
            <person name="Bonacorsi S."/>
            <person name="Bouchier C."/>
            <person name="Bouvet O."/>
            <person name="Calteau A."/>
            <person name="Chiapello H."/>
            <person name="Clermont O."/>
            <person name="Cruveiller S."/>
            <person name="Danchin A."/>
            <person name="Diard M."/>
            <person name="Dossat C."/>
            <person name="Karoui M.E."/>
            <person name="Frapy E."/>
            <person name="Garry L."/>
            <person name="Ghigo J.M."/>
            <person name="Gilles A.M."/>
            <person name="Johnson J."/>
            <person name="Le Bouguenec C."/>
            <person name="Lescat M."/>
            <person name="Mangenot S."/>
            <person name="Martinez-Jehanne V."/>
            <person name="Matic I."/>
            <person name="Nassif X."/>
            <person name="Oztas S."/>
            <person name="Petit M.A."/>
            <person name="Pichon C."/>
            <person name="Rouy Z."/>
            <person name="Ruf C.S."/>
            <person name="Schneider D."/>
            <person name="Tourret J."/>
            <person name="Vacherie B."/>
            <person name="Vallenet D."/>
            <person name="Medigue C."/>
            <person name="Rocha E.P.C."/>
            <person name="Denamur E."/>
        </authorList>
    </citation>
    <scope>NUCLEOTIDE SEQUENCE [LARGE SCALE GENOMIC DNA]</scope>
    <source>
        <strain>55989 / EAEC</strain>
    </source>
</reference>
<keyword id="KW-0028">Amino-acid biosynthesis</keyword>
<keyword id="KW-0057">Aromatic amino acid biosynthesis</keyword>
<keyword id="KW-0520">NAD</keyword>
<keyword id="KW-0521">NADP</keyword>
<keyword id="KW-0560">Oxidoreductase</keyword>
<keyword id="KW-1185">Reference proteome</keyword>
<gene>
    <name evidence="1" type="primary">ydiB</name>
    <name type="ordered locus">EC55989_1859</name>
</gene>
<dbReference type="EC" id="1.1.1.282" evidence="1"/>
<dbReference type="EMBL" id="CU928145">
    <property type="protein sequence ID" value="CAU97717.1"/>
    <property type="molecule type" value="Genomic_DNA"/>
</dbReference>
<dbReference type="RefSeq" id="WP_000383460.1">
    <property type="nucleotide sequence ID" value="NC_011748.1"/>
</dbReference>
<dbReference type="SMR" id="B7L5P4"/>
<dbReference type="GeneID" id="75204539"/>
<dbReference type="KEGG" id="eck:EC55989_1859"/>
<dbReference type="HOGENOM" id="CLU_044063_4_4_6"/>
<dbReference type="UniPathway" id="UPA00053">
    <property type="reaction ID" value="UER00087"/>
</dbReference>
<dbReference type="Proteomes" id="UP000000746">
    <property type="component" value="Chromosome"/>
</dbReference>
<dbReference type="GO" id="GO:0030266">
    <property type="term" value="F:quinate 3-dehydrogenase (NAD+) activity"/>
    <property type="evidence" value="ECO:0007669"/>
    <property type="project" value="UniProtKB-UniRule"/>
</dbReference>
<dbReference type="GO" id="GO:0052733">
    <property type="term" value="F:quinate 3-dehydrogenase (NADP+) activity"/>
    <property type="evidence" value="ECO:0007669"/>
    <property type="project" value="InterPro"/>
</dbReference>
<dbReference type="GO" id="GO:0052734">
    <property type="term" value="F:shikimate 3-dehydrogenase (NAD+) activity"/>
    <property type="evidence" value="ECO:0007669"/>
    <property type="project" value="InterPro"/>
</dbReference>
<dbReference type="GO" id="GO:0004764">
    <property type="term" value="F:shikimate 3-dehydrogenase (NADP+) activity"/>
    <property type="evidence" value="ECO:0007669"/>
    <property type="project" value="UniProtKB-UniRule"/>
</dbReference>
<dbReference type="GO" id="GO:0008652">
    <property type="term" value="P:amino acid biosynthetic process"/>
    <property type="evidence" value="ECO:0007669"/>
    <property type="project" value="UniProtKB-KW"/>
</dbReference>
<dbReference type="GO" id="GO:0009073">
    <property type="term" value="P:aromatic amino acid family biosynthetic process"/>
    <property type="evidence" value="ECO:0007669"/>
    <property type="project" value="UniProtKB-KW"/>
</dbReference>
<dbReference type="GO" id="GO:0009423">
    <property type="term" value="P:chorismate biosynthetic process"/>
    <property type="evidence" value="ECO:0007669"/>
    <property type="project" value="UniProtKB-UniRule"/>
</dbReference>
<dbReference type="GO" id="GO:0019632">
    <property type="term" value="P:shikimate metabolic process"/>
    <property type="evidence" value="ECO:0007669"/>
    <property type="project" value="TreeGrafter"/>
</dbReference>
<dbReference type="CDD" id="cd01065">
    <property type="entry name" value="NAD_bind_Shikimate_DH"/>
    <property type="match status" value="1"/>
</dbReference>
<dbReference type="FunFam" id="3.40.50.10860:FF:000004">
    <property type="entry name" value="Quinate/shikimate dehydrogenase"/>
    <property type="match status" value="1"/>
</dbReference>
<dbReference type="FunFam" id="3.40.50.720:FF:000086">
    <property type="entry name" value="Quinate/shikimate dehydrogenase"/>
    <property type="match status" value="1"/>
</dbReference>
<dbReference type="Gene3D" id="3.40.50.10860">
    <property type="entry name" value="Leucine Dehydrogenase, chain A, domain 1"/>
    <property type="match status" value="1"/>
</dbReference>
<dbReference type="Gene3D" id="3.40.50.720">
    <property type="entry name" value="NAD(P)-binding Rossmann-like Domain"/>
    <property type="match status" value="1"/>
</dbReference>
<dbReference type="HAMAP" id="MF_00222">
    <property type="entry name" value="Shikimate_DH_AroE"/>
    <property type="match status" value="1"/>
</dbReference>
<dbReference type="HAMAP" id="MF_01578">
    <property type="entry name" value="Shikimate_DH_YdiB"/>
    <property type="match status" value="1"/>
</dbReference>
<dbReference type="InterPro" id="IPR046346">
    <property type="entry name" value="Aminoacid_DH-like_N_sf"/>
</dbReference>
<dbReference type="InterPro" id="IPR036291">
    <property type="entry name" value="NAD(P)-bd_dom_sf"/>
</dbReference>
<dbReference type="InterPro" id="IPR022872">
    <property type="entry name" value="Quinate/Shikimate_DH"/>
</dbReference>
<dbReference type="InterPro" id="IPR041121">
    <property type="entry name" value="SDH_C"/>
</dbReference>
<dbReference type="InterPro" id="IPR013708">
    <property type="entry name" value="Shikimate_DH-bd_N"/>
</dbReference>
<dbReference type="InterPro" id="IPR022893">
    <property type="entry name" value="Shikimate_DH_fam"/>
</dbReference>
<dbReference type="NCBIfam" id="NF009390">
    <property type="entry name" value="PRK12749.1"/>
    <property type="match status" value="1"/>
</dbReference>
<dbReference type="PANTHER" id="PTHR21089:SF1">
    <property type="entry name" value="BIFUNCTIONAL 3-DEHYDROQUINATE DEHYDRATASE_SHIKIMATE DEHYDROGENASE, CHLOROPLASTIC"/>
    <property type="match status" value="1"/>
</dbReference>
<dbReference type="PANTHER" id="PTHR21089">
    <property type="entry name" value="SHIKIMATE DEHYDROGENASE"/>
    <property type="match status" value="1"/>
</dbReference>
<dbReference type="Pfam" id="PF18317">
    <property type="entry name" value="SDH_C"/>
    <property type="match status" value="1"/>
</dbReference>
<dbReference type="Pfam" id="PF08501">
    <property type="entry name" value="Shikimate_dh_N"/>
    <property type="match status" value="1"/>
</dbReference>
<dbReference type="SUPFAM" id="SSF53223">
    <property type="entry name" value="Aminoacid dehydrogenase-like, N-terminal domain"/>
    <property type="match status" value="1"/>
</dbReference>
<dbReference type="SUPFAM" id="SSF51735">
    <property type="entry name" value="NAD(P)-binding Rossmann-fold domains"/>
    <property type="match status" value="1"/>
</dbReference>